<sequence>MNDVFSTAQHKLDALGLRCPEPVMMVRKTVRQMAQGETLLIIADDPATTRDIPSFCEFMDHTLIASETSQTPYQYLIKKGL</sequence>
<dbReference type="EMBL" id="CP000446">
    <property type="protein sequence ID" value="ABI37095.1"/>
    <property type="molecule type" value="Genomic_DNA"/>
</dbReference>
<dbReference type="RefSeq" id="WP_011620849.1">
    <property type="nucleotide sequence ID" value="NC_008321.1"/>
</dbReference>
<dbReference type="SMR" id="Q0HPC2"/>
<dbReference type="GeneID" id="94725989"/>
<dbReference type="KEGG" id="she:Shewmr4_0013"/>
<dbReference type="HOGENOM" id="CLU_165255_5_0_6"/>
<dbReference type="GO" id="GO:0005737">
    <property type="term" value="C:cytoplasm"/>
    <property type="evidence" value="ECO:0007669"/>
    <property type="project" value="UniProtKB-SubCell"/>
</dbReference>
<dbReference type="GO" id="GO:0097163">
    <property type="term" value="F:sulfur carrier activity"/>
    <property type="evidence" value="ECO:0007669"/>
    <property type="project" value="UniProtKB-UniRule"/>
</dbReference>
<dbReference type="GO" id="GO:0002143">
    <property type="term" value="P:tRNA wobble position uridine thiolation"/>
    <property type="evidence" value="ECO:0007669"/>
    <property type="project" value="InterPro"/>
</dbReference>
<dbReference type="CDD" id="cd03423">
    <property type="entry name" value="SirA"/>
    <property type="match status" value="1"/>
</dbReference>
<dbReference type="Gene3D" id="3.30.110.40">
    <property type="entry name" value="TusA-like domain"/>
    <property type="match status" value="1"/>
</dbReference>
<dbReference type="HAMAP" id="MF_00413">
    <property type="entry name" value="Thiourid_synth_A"/>
    <property type="match status" value="1"/>
</dbReference>
<dbReference type="InterPro" id="IPR022931">
    <property type="entry name" value="Sulphur_carrier_TusA"/>
</dbReference>
<dbReference type="InterPro" id="IPR001455">
    <property type="entry name" value="TusA-like"/>
</dbReference>
<dbReference type="InterPro" id="IPR036868">
    <property type="entry name" value="TusA-like_sf"/>
</dbReference>
<dbReference type="NCBIfam" id="NF001423">
    <property type="entry name" value="PRK00299.1"/>
    <property type="match status" value="1"/>
</dbReference>
<dbReference type="PANTHER" id="PTHR33279:SF2">
    <property type="entry name" value="SULFUR CARRIER PROTEIN TUSA"/>
    <property type="match status" value="1"/>
</dbReference>
<dbReference type="PANTHER" id="PTHR33279">
    <property type="entry name" value="SULFUR CARRIER PROTEIN YEDF-RELATED"/>
    <property type="match status" value="1"/>
</dbReference>
<dbReference type="Pfam" id="PF01206">
    <property type="entry name" value="TusA"/>
    <property type="match status" value="1"/>
</dbReference>
<dbReference type="SUPFAM" id="SSF64307">
    <property type="entry name" value="SirA-like"/>
    <property type="match status" value="1"/>
</dbReference>
<dbReference type="PROSITE" id="PS01148">
    <property type="entry name" value="UPF0033"/>
    <property type="match status" value="1"/>
</dbReference>
<gene>
    <name evidence="1" type="primary">tusA</name>
    <name type="ordered locus">Shewmr4_0013</name>
</gene>
<name>TUSA_SHESM</name>
<proteinExistence type="inferred from homology"/>
<accession>Q0HPC2</accession>
<keyword id="KW-0963">Cytoplasm</keyword>
<feature type="chain" id="PRO_1000050029" description="Sulfur carrier protein TusA">
    <location>
        <begin position="1"/>
        <end position="81"/>
    </location>
</feature>
<feature type="active site" description="Cysteine persulfide intermediate" evidence="1">
    <location>
        <position position="19"/>
    </location>
</feature>
<evidence type="ECO:0000255" key="1">
    <source>
        <dbReference type="HAMAP-Rule" id="MF_00413"/>
    </source>
</evidence>
<organism>
    <name type="scientific">Shewanella sp. (strain MR-4)</name>
    <dbReference type="NCBI Taxonomy" id="60480"/>
    <lineage>
        <taxon>Bacteria</taxon>
        <taxon>Pseudomonadati</taxon>
        <taxon>Pseudomonadota</taxon>
        <taxon>Gammaproteobacteria</taxon>
        <taxon>Alteromonadales</taxon>
        <taxon>Shewanellaceae</taxon>
        <taxon>Shewanella</taxon>
    </lineage>
</organism>
<comment type="function">
    <text evidence="1">Sulfur carrier protein which probably makes part of a sulfur-relay system.</text>
</comment>
<comment type="subcellular location">
    <subcellularLocation>
        <location evidence="1">Cytoplasm</location>
    </subcellularLocation>
</comment>
<comment type="similarity">
    <text evidence="1">Belongs to the sulfur carrier protein TusA family.</text>
</comment>
<protein>
    <recommendedName>
        <fullName evidence="1">Sulfur carrier protein TusA</fullName>
    </recommendedName>
</protein>
<reference key="1">
    <citation type="submission" date="2006-08" db="EMBL/GenBank/DDBJ databases">
        <title>Complete sequence of Shewanella sp. MR-4.</title>
        <authorList>
            <consortium name="US DOE Joint Genome Institute"/>
            <person name="Copeland A."/>
            <person name="Lucas S."/>
            <person name="Lapidus A."/>
            <person name="Barry K."/>
            <person name="Detter J.C."/>
            <person name="Glavina del Rio T."/>
            <person name="Hammon N."/>
            <person name="Israni S."/>
            <person name="Dalin E."/>
            <person name="Tice H."/>
            <person name="Pitluck S."/>
            <person name="Kiss H."/>
            <person name="Brettin T."/>
            <person name="Bruce D."/>
            <person name="Han C."/>
            <person name="Tapia R."/>
            <person name="Gilna P."/>
            <person name="Schmutz J."/>
            <person name="Larimer F."/>
            <person name="Land M."/>
            <person name="Hauser L."/>
            <person name="Kyrpides N."/>
            <person name="Mikhailova N."/>
            <person name="Nealson K."/>
            <person name="Konstantinidis K."/>
            <person name="Klappenbach J."/>
            <person name="Tiedje J."/>
            <person name="Richardson P."/>
        </authorList>
    </citation>
    <scope>NUCLEOTIDE SEQUENCE [LARGE SCALE GENOMIC DNA]</scope>
    <source>
        <strain>MR-4</strain>
    </source>
</reference>